<feature type="chain" id="PRO_0000172142" description="Putative pre-16S rRNA nuclease">
    <location>
        <begin position="1"/>
        <end position="142"/>
    </location>
</feature>
<keyword id="KW-0963">Cytoplasm</keyword>
<keyword id="KW-0378">Hydrolase</keyword>
<keyword id="KW-0540">Nuclease</keyword>
<keyword id="KW-0690">Ribosome biogenesis</keyword>
<organism>
    <name type="scientific">Staphylococcus aureus (strain MW2)</name>
    <dbReference type="NCBI Taxonomy" id="196620"/>
    <lineage>
        <taxon>Bacteria</taxon>
        <taxon>Bacillati</taxon>
        <taxon>Bacillota</taxon>
        <taxon>Bacilli</taxon>
        <taxon>Bacillales</taxon>
        <taxon>Staphylococcaceae</taxon>
        <taxon>Staphylococcus</taxon>
    </lineage>
</organism>
<accession>P67491</accession>
<accession>Q8NW88</accession>
<accession>Q99TN3</accession>
<dbReference type="EC" id="3.1.-.-" evidence="1"/>
<dbReference type="EMBL" id="BA000033">
    <property type="protein sequence ID" value="BAB95431.1"/>
    <property type="molecule type" value="Genomic_DNA"/>
</dbReference>
<dbReference type="SMR" id="P67491"/>
<dbReference type="KEGG" id="sam:MW1566"/>
<dbReference type="HOGENOM" id="CLU_098240_2_0_9"/>
<dbReference type="GO" id="GO:0005829">
    <property type="term" value="C:cytosol"/>
    <property type="evidence" value="ECO:0007669"/>
    <property type="project" value="TreeGrafter"/>
</dbReference>
<dbReference type="GO" id="GO:0004518">
    <property type="term" value="F:nuclease activity"/>
    <property type="evidence" value="ECO:0007669"/>
    <property type="project" value="UniProtKB-KW"/>
</dbReference>
<dbReference type="GO" id="GO:0000967">
    <property type="term" value="P:rRNA 5'-end processing"/>
    <property type="evidence" value="ECO:0007669"/>
    <property type="project" value="UniProtKB-UniRule"/>
</dbReference>
<dbReference type="CDD" id="cd16964">
    <property type="entry name" value="YqgF"/>
    <property type="match status" value="1"/>
</dbReference>
<dbReference type="FunFam" id="3.30.420.140:FF:000003">
    <property type="entry name" value="Putative pre-16S rRNA nuclease"/>
    <property type="match status" value="1"/>
</dbReference>
<dbReference type="Gene3D" id="3.30.420.140">
    <property type="entry name" value="YqgF/RNase H-like domain"/>
    <property type="match status" value="1"/>
</dbReference>
<dbReference type="HAMAP" id="MF_00651">
    <property type="entry name" value="Nuclease_YqgF"/>
    <property type="match status" value="1"/>
</dbReference>
<dbReference type="InterPro" id="IPR012337">
    <property type="entry name" value="RNaseH-like_sf"/>
</dbReference>
<dbReference type="InterPro" id="IPR005227">
    <property type="entry name" value="YqgF"/>
</dbReference>
<dbReference type="InterPro" id="IPR006641">
    <property type="entry name" value="YqgF/RNaseH-like_dom"/>
</dbReference>
<dbReference type="InterPro" id="IPR037027">
    <property type="entry name" value="YqgF/RNaseH-like_dom_sf"/>
</dbReference>
<dbReference type="NCBIfam" id="TIGR00250">
    <property type="entry name" value="RNAse_H_YqgF"/>
    <property type="match status" value="1"/>
</dbReference>
<dbReference type="PANTHER" id="PTHR33317">
    <property type="entry name" value="POLYNUCLEOTIDYL TRANSFERASE, RIBONUCLEASE H-LIKE SUPERFAMILY PROTEIN"/>
    <property type="match status" value="1"/>
</dbReference>
<dbReference type="PANTHER" id="PTHR33317:SF4">
    <property type="entry name" value="POLYNUCLEOTIDYL TRANSFERASE, RIBONUCLEASE H-LIKE SUPERFAMILY PROTEIN"/>
    <property type="match status" value="1"/>
</dbReference>
<dbReference type="Pfam" id="PF03652">
    <property type="entry name" value="RuvX"/>
    <property type="match status" value="1"/>
</dbReference>
<dbReference type="SMART" id="SM00732">
    <property type="entry name" value="YqgFc"/>
    <property type="match status" value="1"/>
</dbReference>
<dbReference type="SUPFAM" id="SSF53098">
    <property type="entry name" value="Ribonuclease H-like"/>
    <property type="match status" value="1"/>
</dbReference>
<gene>
    <name type="ordered locus">MW1566</name>
</gene>
<sequence>MLQHKILGLDVGSRTVGIAISDIMGWTAQGLDTLRINEENNELGIDQLVDIIKKHNVGTVVIGLPKNMNNSIGFRGEASLTYKEKLLEAYPSIEIVMWDERLSTMAAERSLLEADVSRQKRKQVIDKMAAVFILQGYLDSLH</sequence>
<reference key="1">
    <citation type="journal article" date="2002" name="Lancet">
        <title>Genome and virulence determinants of high virulence community-acquired MRSA.</title>
        <authorList>
            <person name="Baba T."/>
            <person name="Takeuchi F."/>
            <person name="Kuroda M."/>
            <person name="Yuzawa H."/>
            <person name="Aoki K."/>
            <person name="Oguchi A."/>
            <person name="Nagai Y."/>
            <person name="Iwama N."/>
            <person name="Asano K."/>
            <person name="Naimi T."/>
            <person name="Kuroda H."/>
            <person name="Cui L."/>
            <person name="Yamamoto K."/>
            <person name="Hiramatsu K."/>
        </authorList>
    </citation>
    <scope>NUCLEOTIDE SEQUENCE [LARGE SCALE GENOMIC DNA]</scope>
    <source>
        <strain>MW2</strain>
    </source>
</reference>
<name>YQGF_STAAW</name>
<evidence type="ECO:0000255" key="1">
    <source>
        <dbReference type="HAMAP-Rule" id="MF_00651"/>
    </source>
</evidence>
<comment type="function">
    <text evidence="1">Could be a nuclease involved in processing of the 5'-end of pre-16S rRNA.</text>
</comment>
<comment type="subcellular location">
    <subcellularLocation>
        <location evidence="1">Cytoplasm</location>
    </subcellularLocation>
</comment>
<comment type="similarity">
    <text evidence="1">Belongs to the YqgF nuclease family.</text>
</comment>
<protein>
    <recommendedName>
        <fullName evidence="1">Putative pre-16S rRNA nuclease</fullName>
        <ecNumber evidence="1">3.1.-.-</ecNumber>
    </recommendedName>
</protein>
<proteinExistence type="inferred from homology"/>